<keyword id="KW-1064">Adaptive immunity</keyword>
<keyword id="KW-1003">Cell membrane</keyword>
<keyword id="KW-1015">Disulfide bond</keyword>
<keyword id="KW-0325">Glycoprotein</keyword>
<keyword id="KW-0391">Immunity</keyword>
<keyword id="KW-0393">Immunoglobulin domain</keyword>
<keyword id="KW-0472">Membrane</keyword>
<keyword id="KW-0675">Receptor</keyword>
<keyword id="KW-1185">Reference proteome</keyword>
<keyword id="KW-0732">Signal</keyword>
<keyword id="KW-1279">T cell receptor</keyword>
<proteinExistence type="inferred from homology"/>
<comment type="function">
    <text evidence="3 5 6 7">V region of the variable domain of T cell receptor (TR) alpha chain that participates in the antigen recognition (PubMed:24600447). Alpha-beta T cell receptors are antigen specific receptors which are essential to the immune response and are present on the cell surface of T lymphocytes. Recognize peptide-major histocompatibility (MH) (pMH) complexes that are displayed by antigen presenting cells (APC), a prerequisite for efficient T cell adaptive immunity against pathogens (PubMed:25493333). Binding of alpha-beta TR to pMH complex initiates TR-CD3 clustering on the cell surface and intracellular activation of LCK that phosphorylates the ITAM motifs of CD3G, CD3D, CD3E and CD247 enabling the recruitment of ZAP70. In turn ZAP70 phosphorylates LAT, which recruits numerous signaling molecules to form the LAT signalosome. The LAT signalosome propagates signal branching to three major signaling pathways, the calcium, the mitogen-activated protein kinase (MAPK) kinase and the nuclear factor NF-kappa-B (NF-kB) pathways, leading to the mobilization of transcription factors that are critical for gene expression and essential for T cell growth and differentiation (PubMed:23524462). The T cell repertoire is generated in the thymus, by V-(D)-J rearrangement. This repertoire is then shaped by intrathymic selection events to generate a peripheral T cell pool of self-MH restricted, non-autoaggressive T cells. Post-thymic interaction of alpha-beta TR with the pMH complexes shapes TR structural and functional avidity (PubMed:15040585).</text>
</comment>
<comment type="subunit">
    <text evidence="4">Alpha-beta TR is a heterodimer composed of an alpha and beta chain; disulfide-linked. The alpha-beta TR is associated with the transmembrane signaling CD3 coreceptor proteins to form the TR-CD3 (TcR or TCR). The assembly of alpha-beta TR heterodimers with CD3 occurs in the endoplasmic reticulum where a single alpha-beta TR heterodimer associates with one CD3D-CD3E heterodimer, one CD3G-CD3E heterodimer and one CD247 homodimer forming a stable octameric structure. CD3D-CD3E and CD3G-CD3E heterodimers preferentially associate with TR alpha and TR beta chains, respectively. The association of the CD247 homodimer is the last step of TcR assembly in the endoplasmic reticulum and is required for transport to the cell surface.</text>
</comment>
<comment type="subcellular location">
    <subcellularLocation>
        <location evidence="4">Cell membrane</location>
    </subcellularLocation>
</comment>
<comment type="polymorphism">
    <text evidence="9">There are several alleles. The sequence shown is that of IMGT allele TRAV8-1*01.</text>
</comment>
<protein>
    <recommendedName>
        <fullName evidence="8">T cell receptor alpha variable 8-1</fullName>
    </recommendedName>
</protein>
<accession>A0A0A6YYK1</accession>
<feature type="signal peptide" evidence="1">
    <location>
        <begin position="1"/>
        <end position="20"/>
    </location>
</feature>
<feature type="chain" id="PRO_0000443257" description="T cell receptor alpha variable 8-1" evidence="1">
    <location>
        <begin position="21"/>
        <end position="113"/>
    </location>
</feature>
<feature type="domain" description="Ig-like" evidence="2">
    <location>
        <begin position="21"/>
        <end position="113" status="greater than"/>
    </location>
</feature>
<feature type="glycosylation site" description="N-linked (GlcNAc...) asparagine" evidence="1">
    <location>
        <position position="43"/>
    </location>
</feature>
<feature type="disulfide bond" evidence="2">
    <location>
        <begin position="42"/>
        <end position="110"/>
    </location>
</feature>
<feature type="non-terminal residue">
    <location>
        <position position="113"/>
    </location>
</feature>
<reference key="1">
    <citation type="journal article" date="2003" name="Nature">
        <title>The DNA sequence and analysis of human chromosome 14.</title>
        <authorList>
            <person name="Heilig R."/>
            <person name="Eckenberg R."/>
            <person name="Petit J.-L."/>
            <person name="Fonknechten N."/>
            <person name="Da Silva C."/>
            <person name="Cattolico L."/>
            <person name="Levy M."/>
            <person name="Barbe V."/>
            <person name="De Berardinis V."/>
            <person name="Ureta-Vidal A."/>
            <person name="Pelletier E."/>
            <person name="Vico V."/>
            <person name="Anthouard V."/>
            <person name="Rowen L."/>
            <person name="Madan A."/>
            <person name="Qin S."/>
            <person name="Sun H."/>
            <person name="Du H."/>
            <person name="Pepin K."/>
            <person name="Artiguenave F."/>
            <person name="Robert C."/>
            <person name="Cruaud C."/>
            <person name="Bruels T."/>
            <person name="Jaillon O."/>
            <person name="Friedlander L."/>
            <person name="Samson G."/>
            <person name="Brottier P."/>
            <person name="Cure S."/>
            <person name="Segurens B."/>
            <person name="Aniere F."/>
            <person name="Samain S."/>
            <person name="Crespeau H."/>
            <person name="Abbasi N."/>
            <person name="Aiach N."/>
            <person name="Boscus D."/>
            <person name="Dickhoff R."/>
            <person name="Dors M."/>
            <person name="Dubois I."/>
            <person name="Friedman C."/>
            <person name="Gouyvenoux M."/>
            <person name="James R."/>
            <person name="Madan A."/>
            <person name="Mairey-Estrada B."/>
            <person name="Mangenot S."/>
            <person name="Martins N."/>
            <person name="Menard M."/>
            <person name="Oztas S."/>
            <person name="Ratcliffe A."/>
            <person name="Shaffer T."/>
            <person name="Trask B."/>
            <person name="Vacherie B."/>
            <person name="Bellemere C."/>
            <person name="Belser C."/>
            <person name="Besnard-Gonnet M."/>
            <person name="Bartol-Mavel D."/>
            <person name="Boutard M."/>
            <person name="Briez-Silla S."/>
            <person name="Combette S."/>
            <person name="Dufosse-Laurent V."/>
            <person name="Ferron C."/>
            <person name="Lechaplais C."/>
            <person name="Louesse C."/>
            <person name="Muselet D."/>
            <person name="Magdelenat G."/>
            <person name="Pateau E."/>
            <person name="Petit E."/>
            <person name="Sirvain-Trukniewicz P."/>
            <person name="Trybou A."/>
            <person name="Vega-Czarny N."/>
            <person name="Bataille E."/>
            <person name="Bluet E."/>
            <person name="Bordelais I."/>
            <person name="Dubois M."/>
            <person name="Dumont C."/>
            <person name="Guerin T."/>
            <person name="Haffray S."/>
            <person name="Hammadi R."/>
            <person name="Muanga J."/>
            <person name="Pellouin V."/>
            <person name="Robert D."/>
            <person name="Wunderle E."/>
            <person name="Gauguet G."/>
            <person name="Roy A."/>
            <person name="Sainte-Marthe L."/>
            <person name="Verdier J."/>
            <person name="Verdier-Discala C."/>
            <person name="Hillier L.W."/>
            <person name="Fulton L."/>
            <person name="McPherson J."/>
            <person name="Matsuda F."/>
            <person name="Wilson R."/>
            <person name="Scarpelli C."/>
            <person name="Gyapay G."/>
            <person name="Wincker P."/>
            <person name="Saurin W."/>
            <person name="Quetier F."/>
            <person name="Waterston R."/>
            <person name="Hood L."/>
            <person name="Weissenbach J."/>
        </authorList>
    </citation>
    <scope>NUCLEOTIDE SEQUENCE [LARGE SCALE GENOMIC DNA] (IMGT ALLELE TRAV8-1*01)</scope>
</reference>
<reference key="2">
    <citation type="book" date="2001" name="The T Cell Receptor FactsBook.">
        <title>The T Cell Receptor FactsBook.</title>
        <editorList>
            <person name="Lefranc M.P."/>
            <person name="Lefranc G."/>
        </editorList>
        <authorList>
            <person name="Lefranc M.P."/>
            <person name="Lefranc G."/>
        </authorList>
    </citation>
    <scope>NOMENCLATURE</scope>
</reference>
<reference key="3">
    <citation type="journal article" date="2004" name="Nat. Rev. Immunol.">
        <title>The many important facets of T-cell repertoire diversity.</title>
        <authorList>
            <person name="Nikolich-Zugich J."/>
            <person name="Slifka M.K."/>
            <person name="Messaoudi I."/>
        </authorList>
    </citation>
    <scope>REVIEW ON T CELL REPERTOIRE DIVERSITY</scope>
</reference>
<reference key="4">
    <citation type="journal article" date="2010" name="Cold Spring Harb. Perspect. Biol.">
        <title>Structural biology of the T-cell receptor: insights into receptor assembly, ligand recognition, and initiation of signaling.</title>
        <authorList>
            <person name="Wucherpfennig K.W."/>
            <person name="Gagnon E."/>
            <person name="Call M.J."/>
            <person name="Huseby E.S."/>
            <person name="Call M.E."/>
        </authorList>
    </citation>
    <scope>REVIEW ON T CELL RECEPTOR-CD3 COMPLEX ASSEMBLY</scope>
    <scope>SUBCELLULAR LOCATION</scope>
</reference>
<reference key="5">
    <citation type="journal article" date="2013" name="Nat. Rev. Immunol.">
        <title>T cell receptor signalling networks: branched, diversified and bounded.</title>
        <authorList>
            <person name="Brownlie R.J."/>
            <person name="Zamoyska R."/>
        </authorList>
    </citation>
    <scope>REVIEW ON T CELL RECEPTOR SIGNALING</scope>
</reference>
<reference key="6">
    <citation type="journal article" date="2014" name="Front. Immunol.">
        <title>Immunoglobulin and T Cell Receptor Genes: IMGT((R)) and the Birth and Rise of Immunoinformatics.</title>
        <authorList>
            <person name="Lefranc M.P."/>
        </authorList>
    </citation>
    <scope>NOMENCLATURE</scope>
</reference>
<reference key="7">
    <citation type="journal article" date="2015" name="Annu. Rev. Immunol.">
        <title>T cell antigen receptor recognition of antigen-presenting molecules.</title>
        <authorList>
            <person name="Rossjohn J."/>
            <person name="Gras S."/>
            <person name="Miles J.J."/>
            <person name="Turner S.J."/>
            <person name="Godfrey D.I."/>
            <person name="McCluskey J."/>
        </authorList>
    </citation>
    <scope>REVIEW ON FUNCTION</scope>
</reference>
<sequence>MLLLLIPVLGMIFALRDARAQSVSQHNHHVILSEAASLELGCNYSYGGTVNLFWYVQYPGQHLQLLLKYFSGDPLVKGIKGFEAEFIKSKFSFNLRKPSVQWSDTAEYFCAVN</sequence>
<organism>
    <name type="scientific">Homo sapiens</name>
    <name type="common">Human</name>
    <dbReference type="NCBI Taxonomy" id="9606"/>
    <lineage>
        <taxon>Eukaryota</taxon>
        <taxon>Metazoa</taxon>
        <taxon>Chordata</taxon>
        <taxon>Craniata</taxon>
        <taxon>Vertebrata</taxon>
        <taxon>Euteleostomi</taxon>
        <taxon>Mammalia</taxon>
        <taxon>Eutheria</taxon>
        <taxon>Euarchontoglires</taxon>
        <taxon>Primates</taxon>
        <taxon>Haplorrhini</taxon>
        <taxon>Catarrhini</taxon>
        <taxon>Hominidae</taxon>
        <taxon>Homo</taxon>
    </lineage>
</organism>
<gene>
    <name evidence="8" type="primary">TRAV8-1</name>
</gene>
<dbReference type="EMBL" id="AC243980">
    <property type="status" value="NOT_ANNOTATED_CDS"/>
    <property type="molecule type" value="Genomic_DNA"/>
</dbReference>
<dbReference type="SMR" id="A0A0A6YYK1"/>
<dbReference type="FunCoup" id="A0A0A6YYK1">
    <property type="interactions" value="316"/>
</dbReference>
<dbReference type="IMGT_GENE-DB" id="TRAV8-1"/>
<dbReference type="GlyCosmos" id="A0A0A6YYK1">
    <property type="glycosylation" value="1 site, No reported glycans"/>
</dbReference>
<dbReference type="GlyGen" id="A0A0A6YYK1">
    <property type="glycosylation" value="1 site"/>
</dbReference>
<dbReference type="BioMuta" id="TRAV8-1"/>
<dbReference type="Ensembl" id="ENST00000390430.2">
    <property type="protein sequence ID" value="ENSP00000443059.1"/>
    <property type="gene ID" value="ENSG00000211782.2"/>
</dbReference>
<dbReference type="AGR" id="HGNC:12146"/>
<dbReference type="GeneCards" id="TRAV8-1"/>
<dbReference type="HGNC" id="HGNC:12146">
    <property type="gene designation" value="TRAV8-1"/>
</dbReference>
<dbReference type="HPA" id="ENSG00000211782">
    <property type="expression patterns" value="Tissue enriched (lymphoid)"/>
</dbReference>
<dbReference type="neXtProt" id="NX_A0A0A6YYK1"/>
<dbReference type="VEuPathDB" id="HostDB:ENSG00000211782"/>
<dbReference type="GeneTree" id="ENSGT00940000153073"/>
<dbReference type="HOGENOM" id="CLU_077975_8_0_1"/>
<dbReference type="InParanoid" id="A0A0A6YYK1"/>
<dbReference type="OMA" id="HHVILSE"/>
<dbReference type="OrthoDB" id="8947657at2759"/>
<dbReference type="PAN-GO" id="A0A0A6YYK1">
    <property type="GO annotations" value="0 GO annotations based on evolutionary models"/>
</dbReference>
<dbReference type="SignaLink" id="A0A0A6YYK1"/>
<dbReference type="ChiTaRS" id="TRAV8-1">
    <property type="organism name" value="human"/>
</dbReference>
<dbReference type="Pharos" id="A0A0A6YYK1">
    <property type="development level" value="Tdark"/>
</dbReference>
<dbReference type="PRO" id="PR:A0A0A6YYK1"/>
<dbReference type="Proteomes" id="UP000005640">
    <property type="component" value="Chromosome 14"/>
</dbReference>
<dbReference type="RNAct" id="A0A0A6YYK1">
    <property type="molecule type" value="protein"/>
</dbReference>
<dbReference type="Bgee" id="ENSG00000211782">
    <property type="expression patterns" value="Expressed in granulocyte and 78 other cell types or tissues"/>
</dbReference>
<dbReference type="GO" id="GO:0042101">
    <property type="term" value="C:T cell receptor complex"/>
    <property type="evidence" value="ECO:0007669"/>
    <property type="project" value="UniProtKB-KW"/>
</dbReference>
<dbReference type="GO" id="GO:0002250">
    <property type="term" value="P:adaptive immune response"/>
    <property type="evidence" value="ECO:0007669"/>
    <property type="project" value="UniProtKB-KW"/>
</dbReference>
<dbReference type="Gene3D" id="2.60.40.10">
    <property type="entry name" value="Immunoglobulins"/>
    <property type="match status" value="1"/>
</dbReference>
<dbReference type="InterPro" id="IPR007110">
    <property type="entry name" value="Ig-like_dom"/>
</dbReference>
<dbReference type="InterPro" id="IPR036179">
    <property type="entry name" value="Ig-like_dom_sf"/>
</dbReference>
<dbReference type="InterPro" id="IPR013783">
    <property type="entry name" value="Ig-like_fold"/>
</dbReference>
<dbReference type="InterPro" id="IPR013106">
    <property type="entry name" value="Ig_V-set"/>
</dbReference>
<dbReference type="InterPro" id="IPR051287">
    <property type="entry name" value="TCR_variable_region"/>
</dbReference>
<dbReference type="PANTHER" id="PTHR19367:SF31">
    <property type="entry name" value="T CELL RECEPTOR ALPHA VARIABLE 8-1"/>
    <property type="match status" value="1"/>
</dbReference>
<dbReference type="PANTHER" id="PTHR19367">
    <property type="entry name" value="T-CELL RECEPTOR ALPHA CHAIN V REGION"/>
    <property type="match status" value="1"/>
</dbReference>
<dbReference type="Pfam" id="PF07686">
    <property type="entry name" value="V-set"/>
    <property type="match status" value="1"/>
</dbReference>
<dbReference type="SMART" id="SM00406">
    <property type="entry name" value="IGv"/>
    <property type="match status" value="1"/>
</dbReference>
<dbReference type="SUPFAM" id="SSF48726">
    <property type="entry name" value="Immunoglobulin"/>
    <property type="match status" value="1"/>
</dbReference>
<dbReference type="PROSITE" id="PS50835">
    <property type="entry name" value="IG_LIKE"/>
    <property type="match status" value="1"/>
</dbReference>
<evidence type="ECO:0000255" key="1"/>
<evidence type="ECO:0000255" key="2">
    <source>
        <dbReference type="PROSITE-ProRule" id="PRU00114"/>
    </source>
</evidence>
<evidence type="ECO:0000303" key="3">
    <source>
    </source>
</evidence>
<evidence type="ECO:0000303" key="4">
    <source>
    </source>
</evidence>
<evidence type="ECO:0000303" key="5">
    <source>
    </source>
</evidence>
<evidence type="ECO:0000303" key="6">
    <source>
    </source>
</evidence>
<evidence type="ECO:0000303" key="7">
    <source>
    </source>
</evidence>
<evidence type="ECO:0000303" key="8">
    <source ref="2"/>
</evidence>
<evidence type="ECO:0000305" key="9"/>
<name>TVA81_HUMAN</name>